<accession>Q54NJ4</accession>
<keyword id="KW-0067">ATP-binding</keyword>
<keyword id="KW-0347">Helicase</keyword>
<keyword id="KW-0378">Hydrolase</keyword>
<keyword id="KW-0507">mRNA processing</keyword>
<keyword id="KW-0508">mRNA splicing</keyword>
<keyword id="KW-0547">Nucleotide-binding</keyword>
<keyword id="KW-0539">Nucleus</keyword>
<keyword id="KW-1185">Reference proteome</keyword>
<reference key="1">
    <citation type="journal article" date="2005" name="Nature">
        <title>The genome of the social amoeba Dictyostelium discoideum.</title>
        <authorList>
            <person name="Eichinger L."/>
            <person name="Pachebat J.A."/>
            <person name="Gloeckner G."/>
            <person name="Rajandream M.A."/>
            <person name="Sucgang R."/>
            <person name="Berriman M."/>
            <person name="Song J."/>
            <person name="Olsen R."/>
            <person name="Szafranski K."/>
            <person name="Xu Q."/>
            <person name="Tunggal B."/>
            <person name="Kummerfeld S."/>
            <person name="Madera M."/>
            <person name="Konfortov B.A."/>
            <person name="Rivero F."/>
            <person name="Bankier A.T."/>
            <person name="Lehmann R."/>
            <person name="Hamlin N."/>
            <person name="Davies R."/>
            <person name="Gaudet P."/>
            <person name="Fey P."/>
            <person name="Pilcher K."/>
            <person name="Chen G."/>
            <person name="Saunders D."/>
            <person name="Sodergren E.J."/>
            <person name="Davis P."/>
            <person name="Kerhornou A."/>
            <person name="Nie X."/>
            <person name="Hall N."/>
            <person name="Anjard C."/>
            <person name="Hemphill L."/>
            <person name="Bason N."/>
            <person name="Farbrother P."/>
            <person name="Desany B."/>
            <person name="Just E."/>
            <person name="Morio T."/>
            <person name="Rost R."/>
            <person name="Churcher C.M."/>
            <person name="Cooper J."/>
            <person name="Haydock S."/>
            <person name="van Driessche N."/>
            <person name="Cronin A."/>
            <person name="Goodhead I."/>
            <person name="Muzny D.M."/>
            <person name="Mourier T."/>
            <person name="Pain A."/>
            <person name="Lu M."/>
            <person name="Harper D."/>
            <person name="Lindsay R."/>
            <person name="Hauser H."/>
            <person name="James K.D."/>
            <person name="Quiles M."/>
            <person name="Madan Babu M."/>
            <person name="Saito T."/>
            <person name="Buchrieser C."/>
            <person name="Wardroper A."/>
            <person name="Felder M."/>
            <person name="Thangavelu M."/>
            <person name="Johnson D."/>
            <person name="Knights A."/>
            <person name="Loulseged H."/>
            <person name="Mungall K.L."/>
            <person name="Oliver K."/>
            <person name="Price C."/>
            <person name="Quail M.A."/>
            <person name="Urushihara H."/>
            <person name="Hernandez J."/>
            <person name="Rabbinowitsch E."/>
            <person name="Steffen D."/>
            <person name="Sanders M."/>
            <person name="Ma J."/>
            <person name="Kohara Y."/>
            <person name="Sharp S."/>
            <person name="Simmonds M.N."/>
            <person name="Spiegler S."/>
            <person name="Tivey A."/>
            <person name="Sugano S."/>
            <person name="White B."/>
            <person name="Walker D."/>
            <person name="Woodward J.R."/>
            <person name="Winckler T."/>
            <person name="Tanaka Y."/>
            <person name="Shaulsky G."/>
            <person name="Schleicher M."/>
            <person name="Weinstock G.M."/>
            <person name="Rosenthal A."/>
            <person name="Cox E.C."/>
            <person name="Chisholm R.L."/>
            <person name="Gibbs R.A."/>
            <person name="Loomis W.F."/>
            <person name="Platzer M."/>
            <person name="Kay R.R."/>
            <person name="Williams J.G."/>
            <person name="Dear P.H."/>
            <person name="Noegel A.A."/>
            <person name="Barrell B.G."/>
            <person name="Kuspa A."/>
        </authorList>
    </citation>
    <scope>NUCLEOTIDE SEQUENCE [LARGE SCALE GENOMIC DNA]</scope>
    <source>
        <strain>AX4</strain>
    </source>
</reference>
<evidence type="ECO:0000250" key="1">
    <source>
        <dbReference type="UniProtKB" id="O43143"/>
    </source>
</evidence>
<evidence type="ECO:0000255" key="2">
    <source>
        <dbReference type="PROSITE-ProRule" id="PRU00541"/>
    </source>
</evidence>
<evidence type="ECO:0000255" key="3">
    <source>
        <dbReference type="PROSITE-ProRule" id="PRU00542"/>
    </source>
</evidence>
<evidence type="ECO:0000256" key="4">
    <source>
        <dbReference type="SAM" id="MobiDB-lite"/>
    </source>
</evidence>
<evidence type="ECO:0000305" key="5"/>
<organism>
    <name type="scientific">Dictyostelium discoideum</name>
    <name type="common">Social amoeba</name>
    <dbReference type="NCBI Taxonomy" id="44689"/>
    <lineage>
        <taxon>Eukaryota</taxon>
        <taxon>Amoebozoa</taxon>
        <taxon>Evosea</taxon>
        <taxon>Eumycetozoa</taxon>
        <taxon>Dictyostelia</taxon>
        <taxon>Dictyosteliales</taxon>
        <taxon>Dictyosteliaceae</taxon>
        <taxon>Dictyostelium</taxon>
    </lineage>
</organism>
<dbReference type="EC" id="3.6.4.13"/>
<dbReference type="EMBL" id="AAFI02000076">
    <property type="protein sequence ID" value="EAL64818.1"/>
    <property type="molecule type" value="Genomic_DNA"/>
</dbReference>
<dbReference type="RefSeq" id="XP_638323.1">
    <property type="nucleotide sequence ID" value="XM_633231.1"/>
</dbReference>
<dbReference type="SMR" id="Q54NJ4"/>
<dbReference type="FunCoup" id="Q54NJ4">
    <property type="interactions" value="1223"/>
</dbReference>
<dbReference type="STRING" id="44689.Q54NJ4"/>
<dbReference type="PaxDb" id="44689-DDB0233403"/>
<dbReference type="EnsemblProtists" id="EAL64818">
    <property type="protein sequence ID" value="EAL64818"/>
    <property type="gene ID" value="DDB_G0285213"/>
</dbReference>
<dbReference type="GeneID" id="8624993"/>
<dbReference type="KEGG" id="ddi:DDB_G0285213"/>
<dbReference type="dictyBase" id="DDB_G0285213">
    <property type="gene designation" value="dhx15"/>
</dbReference>
<dbReference type="VEuPathDB" id="AmoebaDB:DDB_G0285213"/>
<dbReference type="eggNOG" id="KOG0925">
    <property type="taxonomic scope" value="Eukaryota"/>
</dbReference>
<dbReference type="HOGENOM" id="CLU_001832_7_2_1"/>
<dbReference type="InParanoid" id="Q54NJ4"/>
<dbReference type="OMA" id="MKVYPLY"/>
<dbReference type="PhylomeDB" id="Q54NJ4"/>
<dbReference type="Reactome" id="R-DDI-72163">
    <property type="pathway name" value="mRNA Splicing - Major Pathway"/>
</dbReference>
<dbReference type="PRO" id="PR:Q54NJ4"/>
<dbReference type="Proteomes" id="UP000002195">
    <property type="component" value="Chromosome 4"/>
</dbReference>
<dbReference type="GO" id="GO:0005681">
    <property type="term" value="C:spliceosomal complex"/>
    <property type="evidence" value="ECO:0000250"/>
    <property type="project" value="dictyBase"/>
</dbReference>
<dbReference type="GO" id="GO:0005524">
    <property type="term" value="F:ATP binding"/>
    <property type="evidence" value="ECO:0007669"/>
    <property type="project" value="UniProtKB-KW"/>
</dbReference>
<dbReference type="GO" id="GO:0016887">
    <property type="term" value="F:ATP hydrolysis activity"/>
    <property type="evidence" value="ECO:0007669"/>
    <property type="project" value="RHEA"/>
</dbReference>
<dbReference type="GO" id="GO:0004386">
    <property type="term" value="F:helicase activity"/>
    <property type="evidence" value="ECO:0000318"/>
    <property type="project" value="GO_Central"/>
</dbReference>
<dbReference type="GO" id="GO:0003723">
    <property type="term" value="F:RNA binding"/>
    <property type="evidence" value="ECO:0000318"/>
    <property type="project" value="GO_Central"/>
</dbReference>
<dbReference type="GO" id="GO:0003724">
    <property type="term" value="F:RNA helicase activity"/>
    <property type="evidence" value="ECO:0000250"/>
    <property type="project" value="dictyBase"/>
</dbReference>
<dbReference type="GO" id="GO:0006397">
    <property type="term" value="P:mRNA processing"/>
    <property type="evidence" value="ECO:0007669"/>
    <property type="project" value="UniProtKB-KW"/>
</dbReference>
<dbReference type="GO" id="GO:0008380">
    <property type="term" value="P:RNA splicing"/>
    <property type="evidence" value="ECO:0007669"/>
    <property type="project" value="UniProtKB-KW"/>
</dbReference>
<dbReference type="CDD" id="cd17973">
    <property type="entry name" value="DEXHc_DHX15"/>
    <property type="match status" value="1"/>
</dbReference>
<dbReference type="CDD" id="cd18791">
    <property type="entry name" value="SF2_C_RHA"/>
    <property type="match status" value="1"/>
</dbReference>
<dbReference type="FunFam" id="3.40.50.300:FF:000007">
    <property type="entry name" value="Pre-mRNA-splicing factor ATP-dependent RNA helicase"/>
    <property type="match status" value="1"/>
</dbReference>
<dbReference type="FunFam" id="1.20.120.1080:FF:000003">
    <property type="entry name" value="Pre-mRNA-splicing factor ATP-dependent RNA helicase PRP43"/>
    <property type="match status" value="1"/>
</dbReference>
<dbReference type="FunFam" id="3.40.50.300:FF:001682">
    <property type="entry name" value="Putative pre-mRNA splicing factor ATP-dependent RNA helicase"/>
    <property type="match status" value="1"/>
</dbReference>
<dbReference type="Gene3D" id="1.20.120.1080">
    <property type="match status" value="1"/>
</dbReference>
<dbReference type="Gene3D" id="3.40.50.300">
    <property type="entry name" value="P-loop containing nucleotide triphosphate hydrolases"/>
    <property type="match status" value="2"/>
</dbReference>
<dbReference type="InterPro" id="IPR011709">
    <property type="entry name" value="DEAD-box_helicase_OB_fold"/>
</dbReference>
<dbReference type="InterPro" id="IPR011545">
    <property type="entry name" value="DEAD/DEAH_box_helicase_dom"/>
</dbReference>
<dbReference type="InterPro" id="IPR044756">
    <property type="entry name" value="DHX15_DEXHc"/>
</dbReference>
<dbReference type="InterPro" id="IPR048333">
    <property type="entry name" value="HA2_WH"/>
</dbReference>
<dbReference type="InterPro" id="IPR007502">
    <property type="entry name" value="Helicase-assoc_dom"/>
</dbReference>
<dbReference type="InterPro" id="IPR014001">
    <property type="entry name" value="Helicase_ATP-bd"/>
</dbReference>
<dbReference type="InterPro" id="IPR001650">
    <property type="entry name" value="Helicase_C-like"/>
</dbReference>
<dbReference type="InterPro" id="IPR027417">
    <property type="entry name" value="P-loop_NTPase"/>
</dbReference>
<dbReference type="PANTHER" id="PTHR18934">
    <property type="entry name" value="ATP-DEPENDENT RNA HELICASE"/>
    <property type="match status" value="1"/>
</dbReference>
<dbReference type="PANTHER" id="PTHR18934:SF109">
    <property type="entry name" value="ATP-DEPENDENT RNA HELICASE DHX15 HOMOLOG"/>
    <property type="match status" value="1"/>
</dbReference>
<dbReference type="Pfam" id="PF00270">
    <property type="entry name" value="DEAD"/>
    <property type="match status" value="1"/>
</dbReference>
<dbReference type="Pfam" id="PF21010">
    <property type="entry name" value="HA2_C"/>
    <property type="match status" value="1"/>
</dbReference>
<dbReference type="Pfam" id="PF04408">
    <property type="entry name" value="HA2_N"/>
    <property type="match status" value="1"/>
</dbReference>
<dbReference type="Pfam" id="PF00271">
    <property type="entry name" value="Helicase_C"/>
    <property type="match status" value="1"/>
</dbReference>
<dbReference type="Pfam" id="PF07717">
    <property type="entry name" value="OB_NTP_bind"/>
    <property type="match status" value="1"/>
</dbReference>
<dbReference type="SMART" id="SM00487">
    <property type="entry name" value="DEXDc"/>
    <property type="match status" value="1"/>
</dbReference>
<dbReference type="SMART" id="SM00847">
    <property type="entry name" value="HA2"/>
    <property type="match status" value="1"/>
</dbReference>
<dbReference type="SMART" id="SM00490">
    <property type="entry name" value="HELICc"/>
    <property type="match status" value="1"/>
</dbReference>
<dbReference type="SUPFAM" id="SSF52540">
    <property type="entry name" value="P-loop containing nucleoside triphosphate hydrolases"/>
    <property type="match status" value="1"/>
</dbReference>
<dbReference type="PROSITE" id="PS51192">
    <property type="entry name" value="HELICASE_ATP_BIND_1"/>
    <property type="match status" value="1"/>
</dbReference>
<dbReference type="PROSITE" id="PS51194">
    <property type="entry name" value="HELICASE_CTER"/>
    <property type="match status" value="1"/>
</dbReference>
<comment type="function">
    <text evidence="1">Pre-mRNA processing factor involved in disassembly of spliceosomes after the release of mature mRNA.</text>
</comment>
<comment type="catalytic activity">
    <reaction evidence="1">
        <text>ATP + H2O = ADP + phosphate + H(+)</text>
        <dbReference type="Rhea" id="RHEA:13065"/>
        <dbReference type="ChEBI" id="CHEBI:15377"/>
        <dbReference type="ChEBI" id="CHEBI:15378"/>
        <dbReference type="ChEBI" id="CHEBI:30616"/>
        <dbReference type="ChEBI" id="CHEBI:43474"/>
        <dbReference type="ChEBI" id="CHEBI:456216"/>
        <dbReference type="EC" id="3.6.4.13"/>
    </reaction>
</comment>
<comment type="subcellular location">
    <subcellularLocation>
        <location evidence="1">Nucleus</location>
    </subcellularLocation>
</comment>
<comment type="similarity">
    <text evidence="5">Belongs to the DEAD box helicase family. DEAH subfamily. DDX15/PRP43 sub-subfamily.</text>
</comment>
<protein>
    <recommendedName>
        <fullName>Putative ATP-dependent RNA helicase DHX15</fullName>
        <ecNumber>3.6.4.13</ecNumber>
    </recommendedName>
    <alternativeName>
        <fullName>DEAH box protein 15</fullName>
    </alternativeName>
</protein>
<name>DHX15_DICDI</name>
<sequence>MSKRKHESSDSNKKAMKKQQNKIEEEEEEITNTTTTTTTTNNNYNNIKSNLTIDQWIPKKETFSKRYYEILEKRKELPVWKQKEDFIKVIKENQVVILVGETGSGKTTQIPQFVVDAGLIRPGKMVGVTQPRRVAAISVAKRVSEEMDFELGEEVGYSIRFEELSSARTFMKYLTDGMLLRESMSDPTLNKYDVIILDEAHERTLSTDILFGLIKDILKRRKDLKLIVMSATLEAGKFQKYFENAPLIKVPGRLHPVEIFYTEEAAKDYLESAVRTVIDIHTNEGTGDILVFLTGEEEIEDTCAKIQRETRERGLPPMKTLPLYSSLPIYQQSKIFDTCKERKCIVSTNIAETSLTIDGIVFVVDPGFSKQKTYNPRSRVESLLVAPISKASANQRAGRAGRTRPGKCFRLYTEKAFKELMIQQTHPEILRSNLASVVLQLLKLGVVDLVHFDFMDPPVPDTLIRALEVLHYLGALDDEGQLTEIGSIMSEFPLDPQLSKMLIVSAERSCSNEILTIAAMLSAPNCFMRPKDNRIEADSAKKSFDHFDGDHLTMLNVYHSFKKNGEDPTWCYDNFLNHRAIKQADSVRSQLARILTRFKLPLVSGDVNSKFYYENIKKCIAAGFFMQVAKCEKKNIYFTLGDEQSVIFHPSTGLTRRPEFCIYNEFVLTSENYIRTITDVKFDWLLELAPSYFKQKSFPKKTKETIQRAQRLYSGSSSGSSSGSNKK</sequence>
<feature type="chain" id="PRO_0000330940" description="Putative ATP-dependent RNA helicase DHX15">
    <location>
        <begin position="1"/>
        <end position="727"/>
    </location>
</feature>
<feature type="domain" description="Helicase ATP-binding" evidence="2">
    <location>
        <begin position="87"/>
        <end position="251"/>
    </location>
</feature>
<feature type="domain" description="Helicase C-terminal" evidence="3">
    <location>
        <begin position="273"/>
        <end position="445"/>
    </location>
</feature>
<feature type="region of interest" description="Disordered" evidence="4">
    <location>
        <begin position="1"/>
        <end position="41"/>
    </location>
</feature>
<feature type="short sequence motif" description="DEAH box">
    <location>
        <begin position="198"/>
        <end position="201"/>
    </location>
</feature>
<feature type="compositionally biased region" description="Low complexity" evidence="4">
    <location>
        <begin position="31"/>
        <end position="41"/>
    </location>
</feature>
<feature type="binding site" evidence="2">
    <location>
        <begin position="100"/>
        <end position="107"/>
    </location>
    <ligand>
        <name>ATP</name>
        <dbReference type="ChEBI" id="CHEBI:30616"/>
    </ligand>
</feature>
<gene>
    <name type="primary">dhx15</name>
    <name type="synonym">prp43</name>
    <name type="ORF">DDB_G0285213</name>
</gene>
<proteinExistence type="inferred from homology"/>